<protein>
    <recommendedName>
        <fullName>Cytochrome b</fullName>
    </recommendedName>
    <alternativeName>
        <fullName>Complex III subunit 3</fullName>
    </alternativeName>
    <alternativeName>
        <fullName>Complex III subunit III</fullName>
    </alternativeName>
    <alternativeName>
        <fullName>Cytochrome b-c1 complex subunit 3</fullName>
    </alternativeName>
    <alternativeName>
        <fullName>Ubiquinol-cytochrome-c reductase complex cytochrome b subunit</fullName>
    </alternativeName>
</protein>
<name>CYB_RHIMC</name>
<proteinExistence type="inferred from homology"/>
<organism>
    <name type="scientific">Rhipidomys macconnelli</name>
    <name type="common">MacConnell's climbing mouse</name>
    <dbReference type="NCBI Taxonomy" id="89103"/>
    <lineage>
        <taxon>Eukaryota</taxon>
        <taxon>Metazoa</taxon>
        <taxon>Chordata</taxon>
        <taxon>Craniata</taxon>
        <taxon>Vertebrata</taxon>
        <taxon>Euteleostomi</taxon>
        <taxon>Mammalia</taxon>
        <taxon>Eutheria</taxon>
        <taxon>Euarchontoglires</taxon>
        <taxon>Glires</taxon>
        <taxon>Rodentia</taxon>
        <taxon>Myomorpha</taxon>
        <taxon>Muroidea</taxon>
        <taxon>Cricetidae</taxon>
        <taxon>Sigmodontinae</taxon>
        <taxon>Rhipidomys</taxon>
    </lineage>
</organism>
<accession>Q9XNW3</accession>
<gene>
    <name type="primary">MT-CYB</name>
    <name type="synonym">COB</name>
    <name type="synonym">CYTB</name>
    <name type="synonym">MTCYB</name>
</gene>
<keyword id="KW-0249">Electron transport</keyword>
<keyword id="KW-0349">Heme</keyword>
<keyword id="KW-0408">Iron</keyword>
<keyword id="KW-0472">Membrane</keyword>
<keyword id="KW-0479">Metal-binding</keyword>
<keyword id="KW-0496">Mitochondrion</keyword>
<keyword id="KW-0999">Mitochondrion inner membrane</keyword>
<keyword id="KW-0679">Respiratory chain</keyword>
<keyword id="KW-0812">Transmembrane</keyword>
<keyword id="KW-1133">Transmembrane helix</keyword>
<keyword id="KW-0813">Transport</keyword>
<keyword id="KW-0830">Ubiquinone</keyword>
<feature type="chain" id="PRO_0000255128" description="Cytochrome b">
    <location>
        <begin position="1"/>
        <end position="380"/>
    </location>
</feature>
<feature type="transmembrane region" description="Helical" evidence="2">
    <location>
        <begin position="33"/>
        <end position="53"/>
    </location>
</feature>
<feature type="transmembrane region" description="Helical" evidence="2">
    <location>
        <begin position="77"/>
        <end position="98"/>
    </location>
</feature>
<feature type="transmembrane region" description="Helical" evidence="2">
    <location>
        <begin position="113"/>
        <end position="133"/>
    </location>
</feature>
<feature type="transmembrane region" description="Helical" evidence="2">
    <location>
        <begin position="178"/>
        <end position="198"/>
    </location>
</feature>
<feature type="transmembrane region" description="Helical" evidence="2">
    <location>
        <begin position="226"/>
        <end position="246"/>
    </location>
</feature>
<feature type="transmembrane region" description="Helical" evidence="2">
    <location>
        <begin position="288"/>
        <end position="308"/>
    </location>
</feature>
<feature type="transmembrane region" description="Helical" evidence="2">
    <location>
        <begin position="320"/>
        <end position="340"/>
    </location>
</feature>
<feature type="transmembrane region" description="Helical" evidence="2">
    <location>
        <begin position="347"/>
        <end position="367"/>
    </location>
</feature>
<feature type="binding site" description="axial binding residue" evidence="2">
    <location>
        <position position="83"/>
    </location>
    <ligand>
        <name>heme b</name>
        <dbReference type="ChEBI" id="CHEBI:60344"/>
        <label>b562</label>
    </ligand>
    <ligandPart>
        <name>Fe</name>
        <dbReference type="ChEBI" id="CHEBI:18248"/>
    </ligandPart>
</feature>
<feature type="binding site" description="axial binding residue" evidence="2">
    <location>
        <position position="97"/>
    </location>
    <ligand>
        <name>heme b</name>
        <dbReference type="ChEBI" id="CHEBI:60344"/>
        <label>b566</label>
    </ligand>
    <ligandPart>
        <name>Fe</name>
        <dbReference type="ChEBI" id="CHEBI:18248"/>
    </ligandPart>
</feature>
<feature type="binding site" description="axial binding residue" evidence="2">
    <location>
        <position position="182"/>
    </location>
    <ligand>
        <name>heme b</name>
        <dbReference type="ChEBI" id="CHEBI:60344"/>
        <label>b562</label>
    </ligand>
    <ligandPart>
        <name>Fe</name>
        <dbReference type="ChEBI" id="CHEBI:18248"/>
    </ligandPart>
</feature>
<feature type="binding site" description="axial binding residue" evidence="2">
    <location>
        <position position="196"/>
    </location>
    <ligand>
        <name>heme b</name>
        <dbReference type="ChEBI" id="CHEBI:60344"/>
        <label>b566</label>
    </ligand>
    <ligandPart>
        <name>Fe</name>
        <dbReference type="ChEBI" id="CHEBI:18248"/>
    </ligandPart>
</feature>
<feature type="binding site" evidence="2">
    <location>
        <position position="201"/>
    </location>
    <ligand>
        <name>a ubiquinone</name>
        <dbReference type="ChEBI" id="CHEBI:16389"/>
    </ligand>
</feature>
<comment type="function">
    <text evidence="2">Component of the ubiquinol-cytochrome c reductase complex (complex III or cytochrome b-c1 complex) that is part of the mitochondrial respiratory chain. The b-c1 complex mediates electron transfer from ubiquinol to cytochrome c. Contributes to the generation of a proton gradient across the mitochondrial membrane that is then used for ATP synthesis.</text>
</comment>
<comment type="cofactor">
    <cofactor evidence="2">
        <name>heme b</name>
        <dbReference type="ChEBI" id="CHEBI:60344"/>
    </cofactor>
    <text evidence="2">Binds 2 heme b groups non-covalently.</text>
</comment>
<comment type="subunit">
    <text evidence="2">The cytochrome bc1 complex contains 11 subunits: 3 respiratory subunits (MT-CYB, CYC1 and UQCRFS1), 2 core proteins (UQCRC1 and UQCRC2) and 6 low-molecular weight proteins (UQCRH/QCR6, UQCRB/QCR7, UQCRQ/QCR8, UQCR10/QCR9, UQCR11/QCR10 and a cleavage product of UQCRFS1). This cytochrome bc1 complex then forms a dimer.</text>
</comment>
<comment type="subcellular location">
    <subcellularLocation>
        <location evidence="2">Mitochondrion inner membrane</location>
        <topology evidence="2">Multi-pass membrane protein</topology>
    </subcellularLocation>
</comment>
<comment type="miscellaneous">
    <text evidence="1">Heme 1 (or BL or b562) is low-potential and absorbs at about 562 nm, and heme 2 (or BH or b566) is high-potential and absorbs at about 566 nm.</text>
</comment>
<comment type="similarity">
    <text evidence="3 4">Belongs to the cytochrome b family.</text>
</comment>
<comment type="caution">
    <text evidence="2">The full-length protein contains only eight transmembrane helices, not nine as predicted by bioinformatics tools.</text>
</comment>
<sequence>MTIMRKKHPLLKMINHSFIDLPTPSNISSWWNFGSLLGVCLIIQILTGLFLAMHYTSDTTTAFSSVAHICRDVNYGSLIRYLHANGASMFFICLFIHVGRGIYYGSYTLLETWNIGIILLLTTMATAFVGYVLPWGQMSFWGATVITNLLSAIPYVGSTLVEWIWGGFSVDKATLTRFFAFHFILPFIITALVLVHLLFLHETGSNNPSGLNSNSDKIPFHPYYTIKDLLGILLLLMVLMFLVLFFPDVLGDPDNYTPANPLNTPAHIKPEWYFLFAYAILRSIPNKLGGVLALILSILILAAFPLLNFSKQHGLVYRPITQVLYWIFIANLLVLTWIGGQPVEYPFTMIGQIXSICYFTIIIIFMPIASTIENNILKLH</sequence>
<reference key="1">
    <citation type="journal article" date="1999" name="J. Mammal. Evol.">
        <title>Phylogenetic relationships and the radiation of Sigmodontine rodents in South America: evidence from cytochrome b.</title>
        <authorList>
            <person name="Smith M.F."/>
            <person name="Patton J.L."/>
        </authorList>
    </citation>
    <scope>NUCLEOTIDE SEQUENCE [GENOMIC DNA]</scope>
</reference>
<evidence type="ECO:0000250" key="1"/>
<evidence type="ECO:0000250" key="2">
    <source>
        <dbReference type="UniProtKB" id="P00157"/>
    </source>
</evidence>
<evidence type="ECO:0000255" key="3">
    <source>
        <dbReference type="PROSITE-ProRule" id="PRU00967"/>
    </source>
</evidence>
<evidence type="ECO:0000255" key="4">
    <source>
        <dbReference type="PROSITE-ProRule" id="PRU00968"/>
    </source>
</evidence>
<geneLocation type="mitochondrion"/>
<dbReference type="EMBL" id="AF108681">
    <property type="protein sequence ID" value="AAD45463.1"/>
    <property type="molecule type" value="Genomic_DNA"/>
</dbReference>
<dbReference type="GO" id="GO:0005743">
    <property type="term" value="C:mitochondrial inner membrane"/>
    <property type="evidence" value="ECO:0007669"/>
    <property type="project" value="UniProtKB-SubCell"/>
</dbReference>
<dbReference type="GO" id="GO:0045275">
    <property type="term" value="C:respiratory chain complex III"/>
    <property type="evidence" value="ECO:0007669"/>
    <property type="project" value="InterPro"/>
</dbReference>
<dbReference type="GO" id="GO:0046872">
    <property type="term" value="F:metal ion binding"/>
    <property type="evidence" value="ECO:0007669"/>
    <property type="project" value="UniProtKB-KW"/>
</dbReference>
<dbReference type="GO" id="GO:0008121">
    <property type="term" value="F:ubiquinol-cytochrome-c reductase activity"/>
    <property type="evidence" value="ECO:0007669"/>
    <property type="project" value="InterPro"/>
</dbReference>
<dbReference type="GO" id="GO:0006122">
    <property type="term" value="P:mitochondrial electron transport, ubiquinol to cytochrome c"/>
    <property type="evidence" value="ECO:0007669"/>
    <property type="project" value="TreeGrafter"/>
</dbReference>
<dbReference type="CDD" id="cd00290">
    <property type="entry name" value="cytochrome_b_C"/>
    <property type="match status" value="1"/>
</dbReference>
<dbReference type="CDD" id="cd00284">
    <property type="entry name" value="Cytochrome_b_N"/>
    <property type="match status" value="1"/>
</dbReference>
<dbReference type="FunFam" id="1.20.810.10:FF:000002">
    <property type="entry name" value="Cytochrome b"/>
    <property type="match status" value="1"/>
</dbReference>
<dbReference type="Gene3D" id="1.20.810.10">
    <property type="entry name" value="Cytochrome Bc1 Complex, Chain C"/>
    <property type="match status" value="1"/>
</dbReference>
<dbReference type="InterPro" id="IPR005798">
    <property type="entry name" value="Cyt_b/b6_C"/>
</dbReference>
<dbReference type="InterPro" id="IPR036150">
    <property type="entry name" value="Cyt_b/b6_C_sf"/>
</dbReference>
<dbReference type="InterPro" id="IPR005797">
    <property type="entry name" value="Cyt_b/b6_N"/>
</dbReference>
<dbReference type="InterPro" id="IPR027387">
    <property type="entry name" value="Cytb/b6-like_sf"/>
</dbReference>
<dbReference type="InterPro" id="IPR030689">
    <property type="entry name" value="Cytochrome_b"/>
</dbReference>
<dbReference type="InterPro" id="IPR048260">
    <property type="entry name" value="Cytochrome_b_C_euk/bac"/>
</dbReference>
<dbReference type="InterPro" id="IPR048259">
    <property type="entry name" value="Cytochrome_b_N_euk/bac"/>
</dbReference>
<dbReference type="InterPro" id="IPR016174">
    <property type="entry name" value="Di-haem_cyt_TM"/>
</dbReference>
<dbReference type="PANTHER" id="PTHR19271">
    <property type="entry name" value="CYTOCHROME B"/>
    <property type="match status" value="1"/>
</dbReference>
<dbReference type="PANTHER" id="PTHR19271:SF16">
    <property type="entry name" value="CYTOCHROME B"/>
    <property type="match status" value="1"/>
</dbReference>
<dbReference type="Pfam" id="PF00032">
    <property type="entry name" value="Cytochrom_B_C"/>
    <property type="match status" value="1"/>
</dbReference>
<dbReference type="Pfam" id="PF00033">
    <property type="entry name" value="Cytochrome_B"/>
    <property type="match status" value="1"/>
</dbReference>
<dbReference type="PIRSF" id="PIRSF038885">
    <property type="entry name" value="COB"/>
    <property type="match status" value="1"/>
</dbReference>
<dbReference type="SUPFAM" id="SSF81648">
    <property type="entry name" value="a domain/subunit of cytochrome bc1 complex (Ubiquinol-cytochrome c reductase)"/>
    <property type="match status" value="1"/>
</dbReference>
<dbReference type="SUPFAM" id="SSF81342">
    <property type="entry name" value="Transmembrane di-heme cytochromes"/>
    <property type="match status" value="1"/>
</dbReference>
<dbReference type="PROSITE" id="PS51003">
    <property type="entry name" value="CYTB_CTER"/>
    <property type="match status" value="1"/>
</dbReference>
<dbReference type="PROSITE" id="PS51002">
    <property type="entry name" value="CYTB_NTER"/>
    <property type="match status" value="1"/>
</dbReference>